<reference key="1">
    <citation type="journal article" date="2014" name="Stand. Genomic Sci.">
        <title>Complete genome sequence of Burkholderia phymatum STM815(T), a broad host range and efficient nitrogen-fixing symbiont of Mimosa species.</title>
        <authorList>
            <person name="Moulin L."/>
            <person name="Klonowska A."/>
            <person name="Caroline B."/>
            <person name="Booth K."/>
            <person name="Vriezen J.A."/>
            <person name="Melkonian R."/>
            <person name="James E.K."/>
            <person name="Young J.P."/>
            <person name="Bena G."/>
            <person name="Hauser L."/>
            <person name="Land M."/>
            <person name="Kyrpides N."/>
            <person name="Bruce D."/>
            <person name="Chain P."/>
            <person name="Copeland A."/>
            <person name="Pitluck S."/>
            <person name="Woyke T."/>
            <person name="Lizotte-Waniewski M."/>
            <person name="Bristow J."/>
            <person name="Riley M."/>
        </authorList>
    </citation>
    <scope>NUCLEOTIDE SEQUENCE [LARGE SCALE GENOMIC DNA]</scope>
    <source>
        <strain>DSM 17167 / CIP 108236 / LMG 21445 / STM815</strain>
    </source>
</reference>
<feature type="chain" id="PRO_1000144851" description="2-aminoethylphosphonate--pyruvate transaminase">
    <location>
        <begin position="1"/>
        <end position="370"/>
    </location>
</feature>
<feature type="modified residue" description="N6-(pyridoxal phosphate)lysine" evidence="1">
    <location>
        <position position="194"/>
    </location>
</feature>
<organism>
    <name type="scientific">Paraburkholderia phymatum (strain DSM 17167 / CIP 108236 / LMG 21445 / STM815)</name>
    <name type="common">Burkholderia phymatum</name>
    <dbReference type="NCBI Taxonomy" id="391038"/>
    <lineage>
        <taxon>Bacteria</taxon>
        <taxon>Pseudomonadati</taxon>
        <taxon>Pseudomonadota</taxon>
        <taxon>Betaproteobacteria</taxon>
        <taxon>Burkholderiales</taxon>
        <taxon>Burkholderiaceae</taxon>
        <taxon>Paraburkholderia</taxon>
    </lineage>
</organism>
<sequence length="370" mass="39948">MIPGNDPILLTPGPLTTSPATRHAMLRDWGSWDAAFNRMTQSVCTDLIEIVHGENEYVCVPLQGSGTFAVEAALGTLVPRDGRVLVPNNGAYCARIVKVLQRLGIAHVELPLREDAPVTAAAIEDAFNRDPRITHVAQVHLETSAGLLNPLDEIAAVCKHYGKSLIVDAMSSFGALPIDLRRGGIDALVSASGKCLEGVPGMGFVIVRRSALEACEGRSPSLALDLYDQFAYMQKTTQWRFTPPTHVLAALRTALDQFIAEGGQPARGARYARNCAALVDGMKALGFETFLTADVQAPVIVTFHAPRDPKWQFAEFYAAVREAGYVLYPGKLTQVETFRVGCIGSIGTNEMHDAVAAIGRTLIRLGIRVK</sequence>
<keyword id="KW-0032">Aminotransferase</keyword>
<keyword id="KW-0663">Pyridoxal phosphate</keyword>
<keyword id="KW-0670">Pyruvate</keyword>
<keyword id="KW-1185">Reference proteome</keyword>
<keyword id="KW-0808">Transferase</keyword>
<accession>B2JLS3</accession>
<comment type="function">
    <text evidence="1">Involved in phosphonate degradation.</text>
</comment>
<comment type="catalytic activity">
    <reaction evidence="1">
        <text>(2-aminoethyl)phosphonate + pyruvate = phosphonoacetaldehyde + L-alanine</text>
        <dbReference type="Rhea" id="RHEA:17021"/>
        <dbReference type="ChEBI" id="CHEBI:15361"/>
        <dbReference type="ChEBI" id="CHEBI:57418"/>
        <dbReference type="ChEBI" id="CHEBI:57972"/>
        <dbReference type="ChEBI" id="CHEBI:58383"/>
        <dbReference type="EC" id="2.6.1.37"/>
    </reaction>
</comment>
<comment type="cofactor">
    <cofactor evidence="1">
        <name>pyridoxal 5'-phosphate</name>
        <dbReference type="ChEBI" id="CHEBI:597326"/>
    </cofactor>
</comment>
<comment type="subunit">
    <text evidence="1">Homodimer.</text>
</comment>
<comment type="similarity">
    <text evidence="1">Belongs to the class-V pyridoxal-phosphate-dependent aminotransferase family. PhnW subfamily.</text>
</comment>
<evidence type="ECO:0000255" key="1">
    <source>
        <dbReference type="HAMAP-Rule" id="MF_01376"/>
    </source>
</evidence>
<gene>
    <name evidence="1" type="primary">phnW</name>
    <name type="ordered locus">Bphy_5064</name>
</gene>
<protein>
    <recommendedName>
        <fullName evidence="1">2-aminoethylphosphonate--pyruvate transaminase</fullName>
        <ecNumber evidence="1">2.6.1.37</ecNumber>
    </recommendedName>
    <alternativeName>
        <fullName evidence="1">2-aminoethylphosphonate aminotransferase</fullName>
    </alternativeName>
    <alternativeName>
        <fullName evidence="1">AEP transaminase</fullName>
        <shortName evidence="1">AEPT</shortName>
    </alternativeName>
</protein>
<proteinExistence type="inferred from homology"/>
<dbReference type="EC" id="2.6.1.37" evidence="1"/>
<dbReference type="EMBL" id="CP001044">
    <property type="protein sequence ID" value="ACC74151.1"/>
    <property type="molecule type" value="Genomic_DNA"/>
</dbReference>
<dbReference type="SMR" id="B2JLS3"/>
<dbReference type="STRING" id="391038.Bphy_5064"/>
<dbReference type="KEGG" id="bph:Bphy_5064"/>
<dbReference type="eggNOG" id="COG0075">
    <property type="taxonomic scope" value="Bacteria"/>
</dbReference>
<dbReference type="HOGENOM" id="CLU_027686_3_1_4"/>
<dbReference type="Proteomes" id="UP000001192">
    <property type="component" value="Chromosome 2"/>
</dbReference>
<dbReference type="GO" id="GO:0047304">
    <property type="term" value="F:2-aminoethylphosphonate-pyruvate transaminase activity"/>
    <property type="evidence" value="ECO:0007669"/>
    <property type="project" value="UniProtKB-UniRule"/>
</dbReference>
<dbReference type="GO" id="GO:0019700">
    <property type="term" value="P:organic phosphonate catabolic process"/>
    <property type="evidence" value="ECO:0007669"/>
    <property type="project" value="InterPro"/>
</dbReference>
<dbReference type="Gene3D" id="3.90.1150.10">
    <property type="entry name" value="Aspartate Aminotransferase, domain 1"/>
    <property type="match status" value="1"/>
</dbReference>
<dbReference type="Gene3D" id="3.40.640.10">
    <property type="entry name" value="Type I PLP-dependent aspartate aminotransferase-like (Major domain)"/>
    <property type="match status" value="1"/>
</dbReference>
<dbReference type="HAMAP" id="MF_01376">
    <property type="entry name" value="PhnW_aminotrans_5"/>
    <property type="match status" value="1"/>
</dbReference>
<dbReference type="InterPro" id="IPR000192">
    <property type="entry name" value="Aminotrans_V_dom"/>
</dbReference>
<dbReference type="InterPro" id="IPR012703">
    <property type="entry name" value="NH2EtPonate_pyrv_transaminase"/>
</dbReference>
<dbReference type="InterPro" id="IPR015424">
    <property type="entry name" value="PyrdxlP-dep_Trfase"/>
</dbReference>
<dbReference type="InterPro" id="IPR015421">
    <property type="entry name" value="PyrdxlP-dep_Trfase_major"/>
</dbReference>
<dbReference type="InterPro" id="IPR015422">
    <property type="entry name" value="PyrdxlP-dep_Trfase_small"/>
</dbReference>
<dbReference type="InterPro" id="IPR024169">
    <property type="entry name" value="SP_NH2Trfase/AEP_transaminase"/>
</dbReference>
<dbReference type="NCBIfam" id="TIGR03301">
    <property type="entry name" value="PhnW-AepZ"/>
    <property type="match status" value="1"/>
</dbReference>
<dbReference type="NCBIfam" id="NF010006">
    <property type="entry name" value="PRK13479.1"/>
    <property type="match status" value="1"/>
</dbReference>
<dbReference type="NCBIfam" id="TIGR02326">
    <property type="entry name" value="transamin_PhnW"/>
    <property type="match status" value="1"/>
</dbReference>
<dbReference type="PANTHER" id="PTHR42778">
    <property type="entry name" value="2-AMINOETHYLPHOSPHONATE--PYRUVATE TRANSAMINASE"/>
    <property type="match status" value="1"/>
</dbReference>
<dbReference type="PANTHER" id="PTHR42778:SF1">
    <property type="entry name" value="2-AMINOETHYLPHOSPHONATE--PYRUVATE TRANSAMINASE"/>
    <property type="match status" value="1"/>
</dbReference>
<dbReference type="Pfam" id="PF00266">
    <property type="entry name" value="Aminotran_5"/>
    <property type="match status" value="1"/>
</dbReference>
<dbReference type="PIRSF" id="PIRSF000524">
    <property type="entry name" value="SPT"/>
    <property type="match status" value="1"/>
</dbReference>
<dbReference type="SUPFAM" id="SSF53383">
    <property type="entry name" value="PLP-dependent transferases"/>
    <property type="match status" value="1"/>
</dbReference>
<name>PHNW_PARP8</name>